<reference key="1">
    <citation type="journal article" date="1993" name="Mol. Microbiol.">
        <title>Transaldolase mutants in the yeast Kluyveromyces lactis provide evidence that glucose can be metabolized through the pentose phosphate pathway.</title>
        <authorList>
            <person name="Jacoby J."/>
            <person name="Hollenberg C.P."/>
            <person name="Heinisch J.J."/>
        </authorList>
    </citation>
    <scope>NUCLEOTIDE SEQUENCE [GENOMIC DNA]</scope>
    <source>
        <strain>ATCC 76492 / CBS 2359/152 / CLIB 210</strain>
    </source>
</reference>
<reference key="2">
    <citation type="journal article" date="2004" name="Nature">
        <title>Genome evolution in yeasts.</title>
        <authorList>
            <person name="Dujon B."/>
            <person name="Sherman D."/>
            <person name="Fischer G."/>
            <person name="Durrens P."/>
            <person name="Casaregola S."/>
            <person name="Lafontaine I."/>
            <person name="de Montigny J."/>
            <person name="Marck C."/>
            <person name="Neuveglise C."/>
            <person name="Talla E."/>
            <person name="Goffard N."/>
            <person name="Frangeul L."/>
            <person name="Aigle M."/>
            <person name="Anthouard V."/>
            <person name="Babour A."/>
            <person name="Barbe V."/>
            <person name="Barnay S."/>
            <person name="Blanchin S."/>
            <person name="Beckerich J.-M."/>
            <person name="Beyne E."/>
            <person name="Bleykasten C."/>
            <person name="Boisrame A."/>
            <person name="Boyer J."/>
            <person name="Cattolico L."/>
            <person name="Confanioleri F."/>
            <person name="de Daruvar A."/>
            <person name="Despons L."/>
            <person name="Fabre E."/>
            <person name="Fairhead C."/>
            <person name="Ferry-Dumazet H."/>
            <person name="Groppi A."/>
            <person name="Hantraye F."/>
            <person name="Hennequin C."/>
            <person name="Jauniaux N."/>
            <person name="Joyet P."/>
            <person name="Kachouri R."/>
            <person name="Kerrest A."/>
            <person name="Koszul R."/>
            <person name="Lemaire M."/>
            <person name="Lesur I."/>
            <person name="Ma L."/>
            <person name="Muller H."/>
            <person name="Nicaud J.-M."/>
            <person name="Nikolski M."/>
            <person name="Oztas S."/>
            <person name="Ozier-Kalogeropoulos O."/>
            <person name="Pellenz S."/>
            <person name="Potier S."/>
            <person name="Richard G.-F."/>
            <person name="Straub M.-L."/>
            <person name="Suleau A."/>
            <person name="Swennen D."/>
            <person name="Tekaia F."/>
            <person name="Wesolowski-Louvel M."/>
            <person name="Westhof E."/>
            <person name="Wirth B."/>
            <person name="Zeniou-Meyer M."/>
            <person name="Zivanovic Y."/>
            <person name="Bolotin-Fukuhara M."/>
            <person name="Thierry A."/>
            <person name="Bouchier C."/>
            <person name="Caudron B."/>
            <person name="Scarpelli C."/>
            <person name="Gaillardin C."/>
            <person name="Weissenbach J."/>
            <person name="Wincker P."/>
            <person name="Souciet J.-L."/>
        </authorList>
    </citation>
    <scope>NUCLEOTIDE SEQUENCE [LARGE SCALE GENOMIC DNA]</scope>
    <source>
        <strain>ATCC 8585 / CBS 2359 / DSM 70799 / NBRC 1267 / NRRL Y-1140 / WM37</strain>
    </source>
</reference>
<evidence type="ECO:0000250" key="1"/>
<evidence type="ECO:0000305" key="2"/>
<accession>P34214</accession>
<feature type="initiator methionine" description="Removed" evidence="1">
    <location>
        <position position="1"/>
    </location>
</feature>
<feature type="chain" id="PRO_0000173570" description="Transaldolase">
    <location>
        <begin position="2"/>
        <end position="334"/>
    </location>
</feature>
<feature type="active site" description="Schiff-base intermediate with substrate" evidence="1">
    <location>
        <position position="143"/>
    </location>
</feature>
<feature type="modified residue" description="N-acetylserine" evidence="1">
    <location>
        <position position="2"/>
    </location>
</feature>
<dbReference type="EC" id="2.2.1.2"/>
<dbReference type="EMBL" id="Z17317">
    <property type="protein sequence ID" value="CAA78965.1"/>
    <property type="molecule type" value="Genomic_DNA"/>
</dbReference>
<dbReference type="EMBL" id="CR382121">
    <property type="protein sequence ID" value="CAH02703.1"/>
    <property type="molecule type" value="Genomic_DNA"/>
</dbReference>
<dbReference type="PIR" id="S39870">
    <property type="entry name" value="S39870"/>
</dbReference>
<dbReference type="RefSeq" id="XP_451115.1">
    <property type="nucleotide sequence ID" value="XM_451115.1"/>
</dbReference>
<dbReference type="SMR" id="P34214"/>
<dbReference type="FunCoup" id="P34214">
    <property type="interactions" value="715"/>
</dbReference>
<dbReference type="STRING" id="284590.P34214"/>
<dbReference type="PaxDb" id="284590-P34214"/>
<dbReference type="KEGG" id="kla:KLLA0_A02607g"/>
<dbReference type="eggNOG" id="KOG2772">
    <property type="taxonomic scope" value="Eukaryota"/>
</dbReference>
<dbReference type="HOGENOM" id="CLU_047470_0_1_1"/>
<dbReference type="InParanoid" id="P34214"/>
<dbReference type="OMA" id="THAEFLW"/>
<dbReference type="UniPathway" id="UPA00115">
    <property type="reaction ID" value="UER00414"/>
</dbReference>
<dbReference type="Proteomes" id="UP000000598">
    <property type="component" value="Chromosome A"/>
</dbReference>
<dbReference type="GO" id="GO:0005737">
    <property type="term" value="C:cytoplasm"/>
    <property type="evidence" value="ECO:0007669"/>
    <property type="project" value="InterPro"/>
</dbReference>
<dbReference type="GO" id="GO:0004801">
    <property type="term" value="F:transaldolase activity"/>
    <property type="evidence" value="ECO:0007669"/>
    <property type="project" value="UniProtKB-EC"/>
</dbReference>
<dbReference type="GO" id="GO:0005975">
    <property type="term" value="P:carbohydrate metabolic process"/>
    <property type="evidence" value="ECO:0007669"/>
    <property type="project" value="InterPro"/>
</dbReference>
<dbReference type="GO" id="GO:0009052">
    <property type="term" value="P:pentose-phosphate shunt, non-oxidative branch"/>
    <property type="evidence" value="ECO:0007669"/>
    <property type="project" value="TreeGrafter"/>
</dbReference>
<dbReference type="CDD" id="cd00957">
    <property type="entry name" value="Transaldolase_TalAB"/>
    <property type="match status" value="1"/>
</dbReference>
<dbReference type="FunFam" id="3.20.20.70:FF:000088">
    <property type="entry name" value="Transaldolase"/>
    <property type="match status" value="1"/>
</dbReference>
<dbReference type="Gene3D" id="3.20.20.70">
    <property type="entry name" value="Aldolase class I"/>
    <property type="match status" value="1"/>
</dbReference>
<dbReference type="HAMAP" id="MF_00492">
    <property type="entry name" value="Transaldolase_1"/>
    <property type="match status" value="1"/>
</dbReference>
<dbReference type="InterPro" id="IPR013785">
    <property type="entry name" value="Aldolase_TIM"/>
</dbReference>
<dbReference type="InterPro" id="IPR001585">
    <property type="entry name" value="TAL/FSA"/>
</dbReference>
<dbReference type="InterPro" id="IPR004730">
    <property type="entry name" value="Transaldolase_1"/>
</dbReference>
<dbReference type="InterPro" id="IPR018225">
    <property type="entry name" value="Transaldolase_AS"/>
</dbReference>
<dbReference type="NCBIfam" id="TIGR00874">
    <property type="entry name" value="talAB"/>
    <property type="match status" value="1"/>
</dbReference>
<dbReference type="PANTHER" id="PTHR10683">
    <property type="entry name" value="TRANSALDOLASE"/>
    <property type="match status" value="1"/>
</dbReference>
<dbReference type="PANTHER" id="PTHR10683:SF18">
    <property type="entry name" value="TRANSALDOLASE"/>
    <property type="match status" value="1"/>
</dbReference>
<dbReference type="Pfam" id="PF00923">
    <property type="entry name" value="TAL_FSA"/>
    <property type="match status" value="1"/>
</dbReference>
<dbReference type="SUPFAM" id="SSF51569">
    <property type="entry name" value="Aldolase"/>
    <property type="match status" value="1"/>
</dbReference>
<dbReference type="PROSITE" id="PS01054">
    <property type="entry name" value="TRANSALDOLASE_1"/>
    <property type="match status" value="1"/>
</dbReference>
<dbReference type="PROSITE" id="PS00958">
    <property type="entry name" value="TRANSALDOLASE_2"/>
    <property type="match status" value="1"/>
</dbReference>
<gene>
    <name type="primary">TAL1</name>
    <name type="ordered locus">KLLA0A02607g</name>
</gene>
<keyword id="KW-0007">Acetylation</keyword>
<keyword id="KW-0570">Pentose shunt</keyword>
<keyword id="KW-1185">Reference proteome</keyword>
<keyword id="KW-0704">Schiff base</keyword>
<keyword id="KW-0808">Transferase</keyword>
<organism>
    <name type="scientific">Kluyveromyces lactis (strain ATCC 8585 / CBS 2359 / DSM 70799 / NBRC 1267 / NRRL Y-1140 / WM37)</name>
    <name type="common">Yeast</name>
    <name type="synonym">Candida sphaerica</name>
    <dbReference type="NCBI Taxonomy" id="284590"/>
    <lineage>
        <taxon>Eukaryota</taxon>
        <taxon>Fungi</taxon>
        <taxon>Dikarya</taxon>
        <taxon>Ascomycota</taxon>
        <taxon>Saccharomycotina</taxon>
        <taxon>Saccharomycetes</taxon>
        <taxon>Saccharomycetales</taxon>
        <taxon>Saccharomycetaceae</taxon>
        <taxon>Kluyveromyces</taxon>
    </lineage>
</organism>
<comment type="function">
    <text>Transaldolase is important for the balance of metabolites in the pentose-phosphate pathway.</text>
</comment>
<comment type="catalytic activity">
    <reaction>
        <text>D-sedoheptulose 7-phosphate + D-glyceraldehyde 3-phosphate = D-erythrose 4-phosphate + beta-D-fructose 6-phosphate</text>
        <dbReference type="Rhea" id="RHEA:17053"/>
        <dbReference type="ChEBI" id="CHEBI:16897"/>
        <dbReference type="ChEBI" id="CHEBI:57483"/>
        <dbReference type="ChEBI" id="CHEBI:57634"/>
        <dbReference type="ChEBI" id="CHEBI:59776"/>
        <dbReference type="EC" id="2.2.1.2"/>
    </reaction>
</comment>
<comment type="pathway">
    <text>Carbohydrate degradation; pentose phosphate pathway; D-glyceraldehyde 3-phosphate and beta-D-fructose 6-phosphate from D-ribose 5-phosphate and D-xylulose 5-phosphate (non-oxidative stage): step 2/3.</text>
</comment>
<comment type="subunit">
    <text evidence="1">Homodimer.</text>
</comment>
<comment type="similarity">
    <text evidence="2">Belongs to the transaldolase family. Type 1 subfamily.</text>
</comment>
<proteinExistence type="inferred from homology"/>
<sequence length="334" mass="36477">MSEPSAKKQKFANSLEALKATGTTVVADTGDFESIAKFTPQDATTNPSLILAAAKQQAYAKLIDSAVQYGKKQGQNIDEQVEIAVDKLLVEFGTAILKVVPGRVSTEVDARLSFDKDATVKKALEIIKLYEAEGISKDRVLIKIASTWEGIQAAQELEKEHDIHVNLTLLFSFAQAVAAAEANVTLISPFVGRILDWYKASTGETYTAETDPGVISVKSIYNYYKKHGYNTIVMGASFRNVGEIKALAGVDFLTISPKLLDELLSSDEPVAKILDPESAKAEGSERVSFINDEPKFRFELNEDAMATEKLSEGIRKFSADIVTLFDLIKAKIQA</sequence>
<protein>
    <recommendedName>
        <fullName>Transaldolase</fullName>
        <ecNumber>2.2.1.2</ecNumber>
    </recommendedName>
</protein>
<name>TAL1_KLULA</name>